<protein>
    <recommendedName>
        <fullName>Flagellar M-ring protein</fullName>
    </recommendedName>
</protein>
<accession>O52069</accession>
<accession>Q576H8</accession>
<gene>
    <name type="primary">fliF</name>
    <name type="ordered locus">BruAb2_1083</name>
</gene>
<comment type="function">
    <text evidence="1">The M ring may be actively involved in energy transduction.</text>
</comment>
<comment type="subunit">
    <text evidence="1">The basal body constitutes a major portion of the flagellar organelle and consists of five rings (E,L,P,S, and M) mounted on a central rod. The M ring is integral to the inner membrane of the cell and may be connected to the flagellar rod via the S ring. The S (supramembrane ring) lies just distal to the M ring. The L and P rings lie in the outer membrane and the periplasmic space, respectively (By similarity).</text>
</comment>
<comment type="subcellular location">
    <subcellularLocation>
        <location evidence="1">Cell inner membrane</location>
        <topology evidence="1">Multi-pass membrane protein</topology>
    </subcellularLocation>
    <subcellularLocation>
        <location evidence="1">Bacterial flagellum basal body</location>
    </subcellularLocation>
</comment>
<comment type="similarity">
    <text evidence="4">Belongs to the FliF family.</text>
</comment>
<comment type="caution">
    <text evidence="4">Brucella species display species-specific inactivation of flagellar genes and are consequently nonmotile.</text>
</comment>
<comment type="sequence caution" evidence="4">
    <conflict type="frameshift">
        <sequence resource="EMBL-CDS" id="AAC01568"/>
    </conflict>
</comment>
<reference key="1">
    <citation type="journal article" date="1998" name="Microb. Comp. Genomics">
        <title>On the presence and organization of open reading frames of the nonmotile pathogen Brucella abortus similar to class II, III, and IV flagellar genes and to LcrD virulence superfamily.</title>
        <authorList>
            <person name="Halling S.M."/>
        </authorList>
    </citation>
    <scope>NUCLEOTIDE SEQUENCE [GENOMIC DNA]</scope>
    <source>
        <strain>544 / Biovar 1</strain>
    </source>
</reference>
<reference key="2">
    <citation type="journal article" date="2005" name="J. Bacteriol.">
        <title>Completion of the genome sequence of Brucella abortus and comparison to the highly similar genomes of Brucella melitensis and Brucella suis.</title>
        <authorList>
            <person name="Halling S.M."/>
            <person name="Peterson-Burch B.D."/>
            <person name="Bricker B.J."/>
            <person name="Zuerner R.L."/>
            <person name="Qing Z."/>
            <person name="Li L.-L."/>
            <person name="Kapur V."/>
            <person name="Alt D.P."/>
            <person name="Olsen S.C."/>
        </authorList>
    </citation>
    <scope>NUCLEOTIDE SEQUENCE [LARGE SCALE GENOMIC DNA]</scope>
    <source>
        <strain>9-941</strain>
    </source>
</reference>
<sequence length="580" mass="62198">MAVVWMQQNFQQLIEQLKGTLGKLGARKLIALGLVGAALMGAILYTSIYLGRPSYETLYVGLSRDDVNRMGLALGEAGIPFDVKSDGSSILVPIGKAENARMYLAEKGLPTSNNAGYELFDNMGSLGLTSFMQEITRVRALEGEIARTIQAIRGVKAARVHIVLAEKGSFRRGDQKPSASVVIRAEGGFSAESAQSIRQLVAAAVPSLDASSVTVLDTNGHLLASAGEGANGAALMTASLEQQVASHVDDSIRKALAPYLGLGHFQTSVQAALDTDRRQTKETTYDPESRVERSVRVVRESGDSRNNRNDNATGVEQNIPQEQIQNRNGESSTEKMDRREELTNYEVNSKTVSTVSDGYSIKRLSIAVVIDQARLLQTAGTTPPPANFVDQQITKIRDLVATAAGLNTNRGDVINVTAVNFLDPAGADMEPVSAPWTDTLLRQSGSYANALAILAAVGLLIWFGLRPLLRDQNVKPAGTEVAIREAGEVATPNFIGGAESVGEGVQAVIGGPAAYADQMKTSLSDLRQRMRMPAKLRLEQMIEMDEERVAAVLKQWIHETASGREADPAKASAMPELKAA</sequence>
<keyword id="KW-0975">Bacterial flagellum</keyword>
<keyword id="KW-0997">Cell inner membrane</keyword>
<keyword id="KW-1003">Cell membrane</keyword>
<keyword id="KW-0472">Membrane</keyword>
<keyword id="KW-0812">Transmembrane</keyword>
<keyword id="KW-1133">Transmembrane helix</keyword>
<organism>
    <name type="scientific">Brucella abortus biovar 1 (strain 9-941)</name>
    <dbReference type="NCBI Taxonomy" id="262698"/>
    <lineage>
        <taxon>Bacteria</taxon>
        <taxon>Pseudomonadati</taxon>
        <taxon>Pseudomonadota</taxon>
        <taxon>Alphaproteobacteria</taxon>
        <taxon>Hyphomicrobiales</taxon>
        <taxon>Brucellaceae</taxon>
        <taxon>Brucella/Ochrobactrum group</taxon>
        <taxon>Brucella</taxon>
    </lineage>
</organism>
<feature type="chain" id="PRO_0000180875" description="Flagellar M-ring protein">
    <location>
        <begin position="1"/>
        <end position="580"/>
    </location>
</feature>
<feature type="transmembrane region" description="Helical" evidence="2">
    <location>
        <begin position="29"/>
        <end position="49"/>
    </location>
</feature>
<feature type="transmembrane region" description="Helical" evidence="2">
    <location>
        <begin position="445"/>
        <end position="465"/>
    </location>
</feature>
<feature type="region of interest" description="Disordered" evidence="3">
    <location>
        <begin position="273"/>
        <end position="340"/>
    </location>
</feature>
<feature type="compositionally biased region" description="Basic and acidic residues" evidence="3">
    <location>
        <begin position="274"/>
        <end position="308"/>
    </location>
</feature>
<feature type="compositionally biased region" description="Polar residues" evidence="3">
    <location>
        <begin position="309"/>
        <end position="331"/>
    </location>
</feature>
<feature type="sequence conflict" description="In Ref. 1; AAC01568." evidence="4" ref="1">
    <original>D</original>
    <variation>Y</variation>
    <location>
        <position position="86"/>
    </location>
</feature>
<feature type="sequence conflict" description="In Ref. 1; AAC01568." evidence="4" ref="1">
    <original>M</original>
    <variation>T</variation>
    <location>
        <position position="336"/>
    </location>
</feature>
<dbReference type="EMBL" id="AF019251">
    <property type="protein sequence ID" value="AAC01568.1"/>
    <property type="status" value="ALT_FRAME"/>
    <property type="molecule type" value="Genomic_DNA"/>
</dbReference>
<dbReference type="EMBL" id="AE017224">
    <property type="protein sequence ID" value="AAX76456.1"/>
    <property type="molecule type" value="Genomic_DNA"/>
</dbReference>
<dbReference type="RefSeq" id="WP_011265437.1">
    <property type="nucleotide sequence ID" value="NC_006933.1"/>
</dbReference>
<dbReference type="SMR" id="O52069"/>
<dbReference type="EnsemblBacteria" id="AAX76456">
    <property type="protein sequence ID" value="AAX76456"/>
    <property type="gene ID" value="BruAb2_1083"/>
</dbReference>
<dbReference type="KEGG" id="bmb:BruAb2_1083"/>
<dbReference type="HOGENOM" id="CLU_028108_4_0_5"/>
<dbReference type="PRO" id="PR:O52069"/>
<dbReference type="Proteomes" id="UP000000540">
    <property type="component" value="Chromosome II"/>
</dbReference>
<dbReference type="GO" id="GO:0009431">
    <property type="term" value="C:bacterial-type flagellum basal body, MS ring"/>
    <property type="evidence" value="ECO:0007669"/>
    <property type="project" value="InterPro"/>
</dbReference>
<dbReference type="GO" id="GO:0005886">
    <property type="term" value="C:plasma membrane"/>
    <property type="evidence" value="ECO:0007669"/>
    <property type="project" value="UniProtKB-SubCell"/>
</dbReference>
<dbReference type="GO" id="GO:0003774">
    <property type="term" value="F:cytoskeletal motor activity"/>
    <property type="evidence" value="ECO:0007669"/>
    <property type="project" value="InterPro"/>
</dbReference>
<dbReference type="GO" id="GO:0071973">
    <property type="term" value="P:bacterial-type flagellum-dependent cell motility"/>
    <property type="evidence" value="ECO:0007669"/>
    <property type="project" value="InterPro"/>
</dbReference>
<dbReference type="Gene3D" id="3.30.300.30">
    <property type="match status" value="1"/>
</dbReference>
<dbReference type="InterPro" id="IPR045851">
    <property type="entry name" value="AMP-bd_C_sf"/>
</dbReference>
<dbReference type="InterPro" id="IPR013556">
    <property type="entry name" value="Flag_M-ring_C"/>
</dbReference>
<dbReference type="InterPro" id="IPR000067">
    <property type="entry name" value="FlgMring_FliF"/>
</dbReference>
<dbReference type="InterPro" id="IPR006182">
    <property type="entry name" value="FliF_N_dom"/>
</dbReference>
<dbReference type="InterPro" id="IPR043427">
    <property type="entry name" value="YscJ/FliF"/>
</dbReference>
<dbReference type="NCBIfam" id="TIGR00206">
    <property type="entry name" value="fliF"/>
    <property type="match status" value="1"/>
</dbReference>
<dbReference type="PANTHER" id="PTHR30046">
    <property type="entry name" value="FLAGELLAR M-RING PROTEIN"/>
    <property type="match status" value="1"/>
</dbReference>
<dbReference type="PANTHER" id="PTHR30046:SF0">
    <property type="entry name" value="FLAGELLAR M-RING PROTEIN"/>
    <property type="match status" value="1"/>
</dbReference>
<dbReference type="Pfam" id="PF01514">
    <property type="entry name" value="YscJ_FliF"/>
    <property type="match status" value="1"/>
</dbReference>
<dbReference type="Pfam" id="PF08345">
    <property type="entry name" value="YscJ_FliF_C"/>
    <property type="match status" value="1"/>
</dbReference>
<dbReference type="PIRSF" id="PIRSF004862">
    <property type="entry name" value="FliF"/>
    <property type="match status" value="1"/>
</dbReference>
<dbReference type="PRINTS" id="PR01009">
    <property type="entry name" value="FLGMRINGFLIF"/>
</dbReference>
<name>FLIF_BRUAB</name>
<proteinExistence type="inferred from homology"/>
<evidence type="ECO:0000250" key="1"/>
<evidence type="ECO:0000255" key="2"/>
<evidence type="ECO:0000256" key="3">
    <source>
        <dbReference type="SAM" id="MobiDB-lite"/>
    </source>
</evidence>
<evidence type="ECO:0000305" key="4"/>